<organism>
    <name type="scientific">Turdus merula</name>
    <name type="common">Common blackbird</name>
    <dbReference type="NCBI Taxonomy" id="9187"/>
    <lineage>
        <taxon>Eukaryota</taxon>
        <taxon>Metazoa</taxon>
        <taxon>Chordata</taxon>
        <taxon>Craniata</taxon>
        <taxon>Vertebrata</taxon>
        <taxon>Euteleostomi</taxon>
        <taxon>Archelosauria</taxon>
        <taxon>Archosauria</taxon>
        <taxon>Dinosauria</taxon>
        <taxon>Saurischia</taxon>
        <taxon>Theropoda</taxon>
        <taxon>Coelurosauria</taxon>
        <taxon>Aves</taxon>
        <taxon>Neognathae</taxon>
        <taxon>Neoaves</taxon>
        <taxon>Telluraves</taxon>
        <taxon>Australaves</taxon>
        <taxon>Passeriformes</taxon>
        <taxon>Turdidae</taxon>
        <taxon>Turdus</taxon>
    </lineage>
</organism>
<keyword id="KW-0903">Direct protein sequencing</keyword>
<keyword id="KW-1015">Disulfide bond</keyword>
<keyword id="KW-0325">Glycoprotein</keyword>
<keyword id="KW-0646">Protease inhibitor</keyword>
<keyword id="KW-0677">Repeat</keyword>
<keyword id="KW-0964">Secreted</keyword>
<keyword id="KW-0722">Serine protease inhibitor</keyword>
<sequence length="54" mass="5857">IVTVDCSDYPKPVCTLDYMPLCGSDNTTYSNKCNFCNAVVDSNGTITLSHFGKC</sequence>
<dbReference type="PIR" id="D61589">
    <property type="entry name" value="D61589"/>
</dbReference>
<dbReference type="SMR" id="P52256"/>
<dbReference type="GO" id="GO:0005576">
    <property type="term" value="C:extracellular region"/>
    <property type="evidence" value="ECO:0007669"/>
    <property type="project" value="UniProtKB-SubCell"/>
</dbReference>
<dbReference type="GO" id="GO:0004867">
    <property type="term" value="F:serine-type endopeptidase inhibitor activity"/>
    <property type="evidence" value="ECO:0007669"/>
    <property type="project" value="UniProtKB-KW"/>
</dbReference>
<dbReference type="CDD" id="cd00104">
    <property type="entry name" value="KAZAL_FS"/>
    <property type="match status" value="1"/>
</dbReference>
<dbReference type="FunFam" id="3.30.60.30:FF:000037">
    <property type="entry name" value="Ovomucoid"/>
    <property type="match status" value="1"/>
</dbReference>
<dbReference type="Gene3D" id="3.30.60.30">
    <property type="match status" value="1"/>
</dbReference>
<dbReference type="InterPro" id="IPR051597">
    <property type="entry name" value="Bifunctional_prot_inhibitor"/>
</dbReference>
<dbReference type="InterPro" id="IPR002350">
    <property type="entry name" value="Kazal_dom"/>
</dbReference>
<dbReference type="InterPro" id="IPR036058">
    <property type="entry name" value="Kazal_dom_sf"/>
</dbReference>
<dbReference type="InterPro" id="IPR001239">
    <property type="entry name" value="Prot_inh_Kazal-m"/>
</dbReference>
<dbReference type="PANTHER" id="PTHR47729:SF1">
    <property type="entry name" value="OVOMUCOID-LIKE-RELATED"/>
    <property type="match status" value="1"/>
</dbReference>
<dbReference type="PANTHER" id="PTHR47729">
    <property type="entry name" value="SERINE PEPTIDASE INHIBITOR, KAZAL TYPE 2, TANDEM DUPLICATE 1-RELATED"/>
    <property type="match status" value="1"/>
</dbReference>
<dbReference type="Pfam" id="PF00050">
    <property type="entry name" value="Kazal_1"/>
    <property type="match status" value="1"/>
</dbReference>
<dbReference type="PRINTS" id="PR00290">
    <property type="entry name" value="KAZALINHBTR"/>
</dbReference>
<dbReference type="SMART" id="SM00280">
    <property type="entry name" value="KAZAL"/>
    <property type="match status" value="1"/>
</dbReference>
<dbReference type="SUPFAM" id="SSF100895">
    <property type="entry name" value="Kazal-type serine protease inhibitors"/>
    <property type="match status" value="1"/>
</dbReference>
<dbReference type="PROSITE" id="PS00282">
    <property type="entry name" value="KAZAL_1"/>
    <property type="match status" value="1"/>
</dbReference>
<dbReference type="PROSITE" id="PS51465">
    <property type="entry name" value="KAZAL_2"/>
    <property type="match status" value="1"/>
</dbReference>
<reference key="1">
    <citation type="journal article" date="1993" name="J. Protein Chem.">
        <title>Amino acid sequences of ovomucoid third domains from 27 additional species of birds.</title>
        <authorList>
            <person name="Apostol I."/>
            <person name="Giletto A."/>
            <person name="Komiyama T."/>
            <person name="Zhang W."/>
            <person name="Laskowski M. Jr."/>
        </authorList>
    </citation>
    <scope>PROTEIN SEQUENCE</scope>
</reference>
<feature type="chain" id="PRO_0000073191" description="Ovomucoid">
    <location>
        <begin position="1" status="less than"/>
        <end position="54" status="greater than"/>
    </location>
</feature>
<feature type="domain" description="Kazal-like" evidence="1">
    <location>
        <begin position="4"/>
        <end position="54"/>
    </location>
</feature>
<feature type="site" description="Reactive bond 3">
    <location>
        <begin position="16"/>
        <end position="17"/>
    </location>
</feature>
<feature type="glycosylation site" description="N-linked (GlcNAc...) asparagine">
    <location>
        <position position="43"/>
    </location>
</feature>
<feature type="disulfide bond">
    <location>
        <begin position="6"/>
        <end position="36"/>
    </location>
</feature>
<feature type="disulfide bond">
    <location>
        <begin position="14"/>
        <end position="33"/>
    </location>
</feature>
<feature type="disulfide bond">
    <location>
        <begin position="22"/>
        <end position="54"/>
    </location>
</feature>
<feature type="non-terminal residue">
    <location>
        <position position="1"/>
    </location>
</feature>
<feature type="non-terminal residue">
    <location>
        <position position="54"/>
    </location>
</feature>
<name>IOVO_TURME</name>
<comment type="subcellular location">
    <subcellularLocation>
        <location>Secreted</location>
    </subcellularLocation>
</comment>
<comment type="domain">
    <text>Avian ovomucoid consists of three homologous, tandem Kazal family inhibitory domains.</text>
</comment>
<accession>P52256</accession>
<proteinExistence type="evidence at protein level"/>
<protein>
    <recommendedName>
        <fullName>Ovomucoid</fullName>
    </recommendedName>
</protein>
<evidence type="ECO:0000255" key="1">
    <source>
        <dbReference type="PROSITE-ProRule" id="PRU00798"/>
    </source>
</evidence>